<proteinExistence type="inferred from homology"/>
<comment type="similarity">
    <text evidence="1">Belongs to the glycosyltransferase 25 family.</text>
</comment>
<evidence type="ECO:0000305" key="1"/>
<sequence>MENLKIIVINLKRRTDRREIMEKKFQDENITQYEFFEAFDGETLRPEDPILGVFKHGVHGLSRKGVAGCALSHYTVWQKIAADTSGTKYLVLEDDINFKPNFKENLSKVMKTIEPSQAMILIGMTVNGDDVTKTRDIYELDTSYTIHPLGRDYYAGGLFGYILDYRAAQYFVDYISYNGIRIVIDYLTYRSGFPMYESHPHLVYTQSVQHDGEHVDSDIQHQYDRIKYAIIPNTYEFDDYVFIPNKDSAGGDIREVCADIPILKNIADKDINCVAFNTYGWVKNNIKPLHQLIDIGNRYYESDGIYIKKNYLLKEKIIINSLNL</sequence>
<dbReference type="EC" id="2.-.-.-"/>
<dbReference type="EMBL" id="AY653733">
    <property type="protein sequence ID" value="AAV50916.1"/>
    <property type="molecule type" value="Genomic_DNA"/>
</dbReference>
<dbReference type="SMR" id="Q5UQ62"/>
<dbReference type="CAZy" id="GT25">
    <property type="family name" value="Glycosyltransferase Family 25"/>
</dbReference>
<dbReference type="KEGG" id="vg:9925300"/>
<dbReference type="OrthoDB" id="8758at10239"/>
<dbReference type="Proteomes" id="UP000001134">
    <property type="component" value="Genome"/>
</dbReference>
<dbReference type="GO" id="GO:0016757">
    <property type="term" value="F:glycosyltransferase activity"/>
    <property type="evidence" value="ECO:0007669"/>
    <property type="project" value="UniProtKB-KW"/>
</dbReference>
<dbReference type="CDD" id="cd06532">
    <property type="entry name" value="Glyco_transf_25"/>
    <property type="match status" value="1"/>
</dbReference>
<dbReference type="InterPro" id="IPR050757">
    <property type="entry name" value="Collagen_mod_GT25"/>
</dbReference>
<dbReference type="InterPro" id="IPR002654">
    <property type="entry name" value="Glyco_trans_25"/>
</dbReference>
<dbReference type="PANTHER" id="PTHR10730:SF53">
    <property type="entry name" value="GLYCOSYLTRANSFERASE 25 FAMILY MEMBER"/>
    <property type="match status" value="1"/>
</dbReference>
<dbReference type="PANTHER" id="PTHR10730">
    <property type="entry name" value="PROCOLLAGEN-LYSINE,2-OXOGLUTARATE 5-DIOXYGENASE/GLYCOSYLTRANSFERASE 25 FAMILY MEMBER"/>
    <property type="match status" value="1"/>
</dbReference>
<dbReference type="Pfam" id="PF01755">
    <property type="entry name" value="Glyco_transf_25"/>
    <property type="match status" value="1"/>
</dbReference>
<gene>
    <name type="ordered locus">MIMI_R655</name>
</gene>
<feature type="chain" id="PRO_0000253414" description="Putative glycosyltransferase R655">
    <location>
        <begin position="1"/>
        <end position="324"/>
    </location>
</feature>
<name>YR655_MIMIV</name>
<keyword id="KW-0328">Glycosyltransferase</keyword>
<keyword id="KW-1185">Reference proteome</keyword>
<keyword id="KW-0808">Transferase</keyword>
<accession>Q5UQ62</accession>
<organismHost>
    <name type="scientific">Acanthamoeba polyphaga</name>
    <name type="common">Amoeba</name>
    <dbReference type="NCBI Taxonomy" id="5757"/>
</organismHost>
<reference key="1">
    <citation type="journal article" date="2004" name="Science">
        <title>The 1.2-megabase genome sequence of Mimivirus.</title>
        <authorList>
            <person name="Raoult D."/>
            <person name="Audic S."/>
            <person name="Robert C."/>
            <person name="Abergel C."/>
            <person name="Renesto P."/>
            <person name="Ogata H."/>
            <person name="La Scola B."/>
            <person name="Susan M."/>
            <person name="Claverie J.-M."/>
        </authorList>
    </citation>
    <scope>NUCLEOTIDE SEQUENCE [GENOMIC DNA]</scope>
    <source>
        <strain>Rowbotham-Bradford</strain>
    </source>
</reference>
<organism>
    <name type="scientific">Acanthamoeba polyphaga mimivirus</name>
    <name type="common">APMV</name>
    <dbReference type="NCBI Taxonomy" id="212035"/>
    <lineage>
        <taxon>Viruses</taxon>
        <taxon>Varidnaviria</taxon>
        <taxon>Bamfordvirae</taxon>
        <taxon>Nucleocytoviricota</taxon>
        <taxon>Megaviricetes</taxon>
        <taxon>Imitervirales</taxon>
        <taxon>Mimiviridae</taxon>
        <taxon>Megamimivirinae</taxon>
        <taxon>Mimivirus</taxon>
        <taxon>Mimivirus bradfordmassiliense</taxon>
    </lineage>
</organism>
<protein>
    <recommendedName>
        <fullName>Putative glycosyltransferase R655</fullName>
        <ecNumber>2.-.-.-</ecNumber>
    </recommendedName>
</protein>